<gene>
    <name evidence="2" type="primary">psaC</name>
</gene>
<accession>O78443</accession>
<proteinExistence type="inferred from homology"/>
<sequence length="81" mass="8734">MSHSVKVYDTCIGCTQCVRACPCDVLEMVAWDGCKAGQIASAPRTEDCIGCKRCETACPTDFLSVRVYLGGETTRSMGLAY</sequence>
<dbReference type="EC" id="1.97.1.12" evidence="2"/>
<dbReference type="EMBL" id="AF041468">
    <property type="protein sequence ID" value="AAC35628.1"/>
    <property type="molecule type" value="Genomic_DNA"/>
</dbReference>
<dbReference type="RefSeq" id="NP_050694.1">
    <property type="nucleotide sequence ID" value="NC_000926.1"/>
</dbReference>
<dbReference type="SMR" id="O78443"/>
<dbReference type="GeneID" id="856985"/>
<dbReference type="HOGENOM" id="CLU_139698_8_0_1"/>
<dbReference type="OMA" id="GHMSHAV"/>
<dbReference type="GO" id="GO:0009535">
    <property type="term" value="C:chloroplast thylakoid membrane"/>
    <property type="evidence" value="ECO:0007669"/>
    <property type="project" value="UniProtKB-SubCell"/>
</dbReference>
<dbReference type="GO" id="GO:0009522">
    <property type="term" value="C:photosystem I"/>
    <property type="evidence" value="ECO:0007669"/>
    <property type="project" value="UniProtKB-KW"/>
</dbReference>
<dbReference type="GO" id="GO:0051539">
    <property type="term" value="F:4 iron, 4 sulfur cluster binding"/>
    <property type="evidence" value="ECO:0007669"/>
    <property type="project" value="UniProtKB-KW"/>
</dbReference>
<dbReference type="GO" id="GO:0009055">
    <property type="term" value="F:electron transfer activity"/>
    <property type="evidence" value="ECO:0007669"/>
    <property type="project" value="UniProtKB-UniRule"/>
</dbReference>
<dbReference type="GO" id="GO:0046872">
    <property type="term" value="F:metal ion binding"/>
    <property type="evidence" value="ECO:0007669"/>
    <property type="project" value="UniProtKB-KW"/>
</dbReference>
<dbReference type="GO" id="GO:0016491">
    <property type="term" value="F:oxidoreductase activity"/>
    <property type="evidence" value="ECO:0007669"/>
    <property type="project" value="UniProtKB-KW"/>
</dbReference>
<dbReference type="GO" id="GO:0009773">
    <property type="term" value="P:photosynthetic electron transport in photosystem I"/>
    <property type="evidence" value="ECO:0007669"/>
    <property type="project" value="InterPro"/>
</dbReference>
<dbReference type="FunFam" id="3.30.70.20:FF:000001">
    <property type="entry name" value="Photosystem I iron-sulfur center"/>
    <property type="match status" value="1"/>
</dbReference>
<dbReference type="Gene3D" id="3.30.70.20">
    <property type="match status" value="1"/>
</dbReference>
<dbReference type="HAMAP" id="MF_01303">
    <property type="entry name" value="PSI_PsaC"/>
    <property type="match status" value="1"/>
</dbReference>
<dbReference type="InterPro" id="IPR017896">
    <property type="entry name" value="4Fe4S_Fe-S-bd"/>
</dbReference>
<dbReference type="InterPro" id="IPR017900">
    <property type="entry name" value="4Fe4S_Fe_S_CS"/>
</dbReference>
<dbReference type="InterPro" id="IPR050157">
    <property type="entry name" value="PSI_iron-sulfur_center"/>
</dbReference>
<dbReference type="InterPro" id="IPR017491">
    <property type="entry name" value="PSI_PsaC"/>
</dbReference>
<dbReference type="NCBIfam" id="TIGR03048">
    <property type="entry name" value="PS_I_psaC"/>
    <property type="match status" value="1"/>
</dbReference>
<dbReference type="PANTHER" id="PTHR24960:SF79">
    <property type="entry name" value="PHOTOSYSTEM I IRON-SULFUR CENTER"/>
    <property type="match status" value="1"/>
</dbReference>
<dbReference type="PANTHER" id="PTHR24960">
    <property type="entry name" value="PHOTOSYSTEM I IRON-SULFUR CENTER-RELATED"/>
    <property type="match status" value="1"/>
</dbReference>
<dbReference type="Pfam" id="PF12838">
    <property type="entry name" value="Fer4_7"/>
    <property type="match status" value="1"/>
</dbReference>
<dbReference type="SUPFAM" id="SSF54862">
    <property type="entry name" value="4Fe-4S ferredoxins"/>
    <property type="match status" value="1"/>
</dbReference>
<dbReference type="PROSITE" id="PS00198">
    <property type="entry name" value="4FE4S_FER_1"/>
    <property type="match status" value="2"/>
</dbReference>
<dbReference type="PROSITE" id="PS51379">
    <property type="entry name" value="4FE4S_FER_2"/>
    <property type="match status" value="2"/>
</dbReference>
<keyword id="KW-0004">4Fe-4S</keyword>
<keyword id="KW-0150">Chloroplast</keyword>
<keyword id="KW-0249">Electron transport</keyword>
<keyword id="KW-0408">Iron</keyword>
<keyword id="KW-0411">Iron-sulfur</keyword>
<keyword id="KW-0472">Membrane</keyword>
<keyword id="KW-0479">Metal-binding</keyword>
<keyword id="KW-0560">Oxidoreductase</keyword>
<keyword id="KW-0602">Photosynthesis</keyword>
<keyword id="KW-0603">Photosystem I</keyword>
<keyword id="KW-0934">Plastid</keyword>
<keyword id="KW-0677">Repeat</keyword>
<keyword id="KW-0793">Thylakoid</keyword>
<keyword id="KW-0813">Transport</keyword>
<organism>
    <name type="scientific">Guillardia theta</name>
    <name type="common">Cryptophyte</name>
    <name type="synonym">Cryptomonas phi</name>
    <dbReference type="NCBI Taxonomy" id="55529"/>
    <lineage>
        <taxon>Eukaryota</taxon>
        <taxon>Cryptophyceae</taxon>
        <taxon>Pyrenomonadales</taxon>
        <taxon>Geminigeraceae</taxon>
        <taxon>Guillardia</taxon>
    </lineage>
</organism>
<feature type="initiator methionine" description="Removed" evidence="1">
    <location>
        <position position="1"/>
    </location>
</feature>
<feature type="chain" id="PRO_0000061983" description="Photosystem I iron-sulfur center">
    <location>
        <begin position="2"/>
        <end position="81"/>
    </location>
</feature>
<feature type="domain" description="4Fe-4S ferredoxin-type 1" evidence="2">
    <location>
        <begin position="2"/>
        <end position="31"/>
    </location>
</feature>
<feature type="domain" description="4Fe-4S ferredoxin-type 2" evidence="2">
    <location>
        <begin position="39"/>
        <end position="68"/>
    </location>
</feature>
<feature type="binding site" evidence="2">
    <location>
        <position position="11"/>
    </location>
    <ligand>
        <name>[4Fe-4S] cluster</name>
        <dbReference type="ChEBI" id="CHEBI:49883"/>
        <label>1</label>
    </ligand>
</feature>
<feature type="binding site" evidence="2">
    <location>
        <position position="14"/>
    </location>
    <ligand>
        <name>[4Fe-4S] cluster</name>
        <dbReference type="ChEBI" id="CHEBI:49883"/>
        <label>1</label>
    </ligand>
</feature>
<feature type="binding site" evidence="2">
    <location>
        <position position="17"/>
    </location>
    <ligand>
        <name>[4Fe-4S] cluster</name>
        <dbReference type="ChEBI" id="CHEBI:49883"/>
        <label>1</label>
    </ligand>
</feature>
<feature type="binding site" evidence="2">
    <location>
        <position position="21"/>
    </location>
    <ligand>
        <name>[4Fe-4S] cluster</name>
        <dbReference type="ChEBI" id="CHEBI:49883"/>
        <label>2</label>
    </ligand>
</feature>
<feature type="binding site" evidence="2">
    <location>
        <position position="48"/>
    </location>
    <ligand>
        <name>[4Fe-4S] cluster</name>
        <dbReference type="ChEBI" id="CHEBI:49883"/>
        <label>2</label>
    </ligand>
</feature>
<feature type="binding site" evidence="2">
    <location>
        <position position="51"/>
    </location>
    <ligand>
        <name>[4Fe-4S] cluster</name>
        <dbReference type="ChEBI" id="CHEBI:49883"/>
        <label>2</label>
    </ligand>
</feature>
<feature type="binding site" evidence="2">
    <location>
        <position position="54"/>
    </location>
    <ligand>
        <name>[4Fe-4S] cluster</name>
        <dbReference type="ChEBI" id="CHEBI:49883"/>
        <label>2</label>
    </ligand>
</feature>
<feature type="binding site" evidence="2">
    <location>
        <position position="58"/>
    </location>
    <ligand>
        <name>[4Fe-4S] cluster</name>
        <dbReference type="ChEBI" id="CHEBI:49883"/>
        <label>1</label>
    </ligand>
</feature>
<protein>
    <recommendedName>
        <fullName evidence="2">Photosystem I iron-sulfur center</fullName>
        <ecNumber evidence="2">1.97.1.12</ecNumber>
    </recommendedName>
    <alternativeName>
        <fullName evidence="2">9 kDa polypeptide</fullName>
    </alternativeName>
    <alternativeName>
        <fullName evidence="2">PSI-C</fullName>
    </alternativeName>
    <alternativeName>
        <fullName evidence="2">Photosystem I subunit VII</fullName>
    </alternativeName>
    <alternativeName>
        <fullName evidence="2">PsaC</fullName>
    </alternativeName>
</protein>
<name>PSAC_GUITH</name>
<geneLocation type="chloroplast"/>
<reference key="1">
    <citation type="journal article" date="1999" name="J. Mol. Evol.">
        <title>The plastid genome of the cryptophyte alga, Guillardia theta: complete sequence and conserved synteny groups confirm its common ancestry with red algae.</title>
        <authorList>
            <person name="Douglas S.E."/>
            <person name="Penny S.L."/>
        </authorList>
    </citation>
    <scope>NUCLEOTIDE SEQUENCE [LARGE SCALE GENOMIC DNA]</scope>
</reference>
<comment type="function">
    <text>Apoprotein for the two 4Fe-4S centers FA and FB of photosystem I (PSI); essential for photochemical activity. FB is the terminal electron acceptor of PSI, donating electrons to ferredoxin. The C-terminus interacts with PsaA/B/D and helps assemble the protein into the PSI complex. Required for binding of PsaD and PsaE to PSI. PSI is a plastocyanin/cytochrome c6-ferredoxin oxidoreductase, converting photonic excitation into a charge separation, which transfers an electron from the donor P700 chlorophyll pair to the spectroscopically characterized acceptors A0, A1, FX, FA and FB in turn.</text>
</comment>
<comment type="catalytic activity">
    <reaction evidence="2">
        <text>reduced [plastocyanin] + hnu + oxidized [2Fe-2S]-[ferredoxin] = oxidized [plastocyanin] + reduced [2Fe-2S]-[ferredoxin]</text>
        <dbReference type="Rhea" id="RHEA:30407"/>
        <dbReference type="Rhea" id="RHEA-COMP:10000"/>
        <dbReference type="Rhea" id="RHEA-COMP:10001"/>
        <dbReference type="Rhea" id="RHEA-COMP:10039"/>
        <dbReference type="Rhea" id="RHEA-COMP:10040"/>
        <dbReference type="ChEBI" id="CHEBI:29036"/>
        <dbReference type="ChEBI" id="CHEBI:30212"/>
        <dbReference type="ChEBI" id="CHEBI:33737"/>
        <dbReference type="ChEBI" id="CHEBI:33738"/>
        <dbReference type="ChEBI" id="CHEBI:49552"/>
        <dbReference type="EC" id="1.97.1.12"/>
    </reaction>
</comment>
<comment type="cofactor">
    <cofactor evidence="2">
        <name>[4Fe-4S] cluster</name>
        <dbReference type="ChEBI" id="CHEBI:49883"/>
    </cofactor>
    <text evidence="2">Binds 2 [4Fe-4S] clusters. Cluster 2 is most probably the spectroscopically characterized electron acceptor FA and cluster 1 is most probably FB.</text>
</comment>
<comment type="subunit">
    <text evidence="2">The eukaryotic PSI reaction center is composed of at least 11 subunits.</text>
</comment>
<comment type="subcellular location">
    <subcellularLocation>
        <location evidence="2">Plastid</location>
        <location evidence="2">Chloroplast thylakoid membrane</location>
        <topology evidence="2">Peripheral membrane protein</topology>
        <orientation evidence="2">Stromal side</orientation>
    </subcellularLocation>
</comment>
<evidence type="ECO:0000250" key="1"/>
<evidence type="ECO:0000255" key="2">
    <source>
        <dbReference type="HAMAP-Rule" id="MF_01303"/>
    </source>
</evidence>